<organism>
    <name type="scientific">Dictyostelium discoideum</name>
    <name type="common">Social amoeba</name>
    <dbReference type="NCBI Taxonomy" id="44689"/>
    <lineage>
        <taxon>Eukaryota</taxon>
        <taxon>Amoebozoa</taxon>
        <taxon>Evosea</taxon>
        <taxon>Eumycetozoa</taxon>
        <taxon>Dictyostelia</taxon>
        <taxon>Dictyosteliales</taxon>
        <taxon>Dictyosteliaceae</taxon>
        <taxon>Dictyostelium</taxon>
    </lineage>
</organism>
<feature type="chain" id="PRO_0000087407" description="Glycoprotein 24A">
    <location>
        <begin position="1"/>
        <end position="102"/>
    </location>
</feature>
<dbReference type="EMBL" id="M27588">
    <property type="protein sequence ID" value="AAA33209.1"/>
    <property type="molecule type" value="Genomic_DNA"/>
</dbReference>
<dbReference type="EMBL" id="AAFI02000008">
    <property type="protein sequence ID" value="EAL71054.1"/>
    <property type="molecule type" value="Genomic_DNA"/>
</dbReference>
<dbReference type="PIR" id="A34862">
    <property type="entry name" value="A34862"/>
</dbReference>
<dbReference type="RefSeq" id="XP_644943.1">
    <property type="nucleotide sequence ID" value="XM_639851.1"/>
</dbReference>
<dbReference type="STRING" id="44689.P16642"/>
<dbReference type="PaxDb" id="44689-DDB0185034"/>
<dbReference type="EnsemblProtists" id="EAL71054">
    <property type="protein sequence ID" value="EAL71054"/>
    <property type="gene ID" value="DDB_G0272833"/>
</dbReference>
<dbReference type="GeneID" id="8618622"/>
<dbReference type="KEGG" id="ddi:DDB_G0272833"/>
<dbReference type="dictyBase" id="DDB_G0272833">
    <property type="gene designation" value="csbA"/>
</dbReference>
<dbReference type="VEuPathDB" id="AmoebaDB:DDB_G0272833"/>
<dbReference type="HOGENOM" id="CLU_167198_0_0_1"/>
<dbReference type="InParanoid" id="P16642"/>
<dbReference type="OMA" id="PPIYIFR"/>
<dbReference type="PhylomeDB" id="P16642"/>
<dbReference type="PRO" id="PR:P16642"/>
<dbReference type="Proteomes" id="UP000002195">
    <property type="component" value="Chromosome 2"/>
</dbReference>
<dbReference type="GO" id="GO:0009986">
    <property type="term" value="C:cell surface"/>
    <property type="evidence" value="ECO:0007669"/>
    <property type="project" value="UniProtKB-SubCell"/>
</dbReference>
<dbReference type="GO" id="GO:0031152">
    <property type="term" value="P:aggregation involved in sorocarp development"/>
    <property type="evidence" value="ECO:0000314"/>
    <property type="project" value="dictyBase"/>
</dbReference>
<dbReference type="GO" id="GO:0098609">
    <property type="term" value="P:cell-cell adhesion"/>
    <property type="evidence" value="ECO:0000315"/>
    <property type="project" value="dictyBase"/>
</dbReference>
<dbReference type="GO" id="GO:0031154">
    <property type="term" value="P:culmination involved in sorocarp development"/>
    <property type="evidence" value="ECO:0000316"/>
    <property type="project" value="dictyBase"/>
</dbReference>
<dbReference type="GO" id="GO:0006974">
    <property type="term" value="P:DNA damage response"/>
    <property type="evidence" value="ECO:0000316"/>
    <property type="project" value="dictyBase"/>
</dbReference>
<dbReference type="InterPro" id="IPR008601">
    <property type="entry name" value="Dicty_CAD"/>
</dbReference>
<dbReference type="Pfam" id="PF05720">
    <property type="entry name" value="Dicty_CAD"/>
    <property type="match status" value="1"/>
</dbReference>
<keyword id="KW-0130">Cell adhesion</keyword>
<keyword id="KW-0325">Glycoprotein</keyword>
<keyword id="KW-1185">Reference proteome</keyword>
<evidence type="ECO:0000305" key="1"/>
<proteinExistence type="evidence at transcript level"/>
<comment type="function">
    <text>Cell-cell adhesion during early development.</text>
</comment>
<comment type="subcellular location">
    <subcellularLocation>
        <location>Cell surface</location>
    </subcellularLocation>
</comment>
<comment type="developmental stage">
    <text>Plays an essential role during early development.</text>
</comment>
<comment type="PTM">
    <text>O-glycosylated.</text>
</comment>
<comment type="similarity">
    <text evidence="1">Belongs to the csb family.</text>
</comment>
<protein>
    <recommendedName>
        <fullName>Glycoprotein 24A</fullName>
        <shortName>gp24A</shortName>
    </recommendedName>
    <alternativeName>
        <fullName>Contact site B protein A</fullName>
    </alternativeName>
</protein>
<reference key="1">
    <citation type="journal article" date="1990" name="Proc. Natl. Acad. Sci. U.S.A.">
        <title>A pair of tandemly repeated genes code for gp24, a putative adhesion protein of Dictyostelium discoideum.</title>
        <authorList>
            <person name="Loomis W.F."/>
            <person name="Fuller D.L."/>
        </authorList>
    </citation>
    <scope>NUCLEOTIDE SEQUENCE [GENOMIC DNA]</scope>
    <source>
        <strain>AX4</strain>
    </source>
</reference>
<reference key="2">
    <citation type="journal article" date="2002" name="Nature">
        <title>Sequence and analysis of chromosome 2 of Dictyostelium discoideum.</title>
        <authorList>
            <person name="Gloeckner G."/>
            <person name="Eichinger L."/>
            <person name="Szafranski K."/>
            <person name="Pachebat J.A."/>
            <person name="Bankier A.T."/>
            <person name="Dear P.H."/>
            <person name="Lehmann R."/>
            <person name="Baumgart C."/>
            <person name="Parra G."/>
            <person name="Abril J.F."/>
            <person name="Guigo R."/>
            <person name="Kumpf K."/>
            <person name="Tunggal B."/>
            <person name="Cox E.C."/>
            <person name="Quail M.A."/>
            <person name="Platzer M."/>
            <person name="Rosenthal A."/>
            <person name="Noegel A.A."/>
        </authorList>
    </citation>
    <scope>NUCLEOTIDE SEQUENCE [LARGE SCALE GENOMIC DNA]</scope>
    <source>
        <strain>AX4</strain>
    </source>
</reference>
<reference key="3">
    <citation type="journal article" date="2005" name="Nature">
        <title>The genome of the social amoeba Dictyostelium discoideum.</title>
        <authorList>
            <person name="Eichinger L."/>
            <person name="Pachebat J.A."/>
            <person name="Gloeckner G."/>
            <person name="Rajandream M.A."/>
            <person name="Sucgang R."/>
            <person name="Berriman M."/>
            <person name="Song J."/>
            <person name="Olsen R."/>
            <person name="Szafranski K."/>
            <person name="Xu Q."/>
            <person name="Tunggal B."/>
            <person name="Kummerfeld S."/>
            <person name="Madera M."/>
            <person name="Konfortov B.A."/>
            <person name="Rivero F."/>
            <person name="Bankier A.T."/>
            <person name="Lehmann R."/>
            <person name="Hamlin N."/>
            <person name="Davies R."/>
            <person name="Gaudet P."/>
            <person name="Fey P."/>
            <person name="Pilcher K."/>
            <person name="Chen G."/>
            <person name="Saunders D."/>
            <person name="Sodergren E.J."/>
            <person name="Davis P."/>
            <person name="Kerhornou A."/>
            <person name="Nie X."/>
            <person name="Hall N."/>
            <person name="Anjard C."/>
            <person name="Hemphill L."/>
            <person name="Bason N."/>
            <person name="Farbrother P."/>
            <person name="Desany B."/>
            <person name="Just E."/>
            <person name="Morio T."/>
            <person name="Rost R."/>
            <person name="Churcher C.M."/>
            <person name="Cooper J."/>
            <person name="Haydock S."/>
            <person name="van Driessche N."/>
            <person name="Cronin A."/>
            <person name="Goodhead I."/>
            <person name="Muzny D.M."/>
            <person name="Mourier T."/>
            <person name="Pain A."/>
            <person name="Lu M."/>
            <person name="Harper D."/>
            <person name="Lindsay R."/>
            <person name="Hauser H."/>
            <person name="James K.D."/>
            <person name="Quiles M."/>
            <person name="Madan Babu M."/>
            <person name="Saito T."/>
            <person name="Buchrieser C."/>
            <person name="Wardroper A."/>
            <person name="Felder M."/>
            <person name="Thangavelu M."/>
            <person name="Johnson D."/>
            <person name="Knights A."/>
            <person name="Loulseged H."/>
            <person name="Mungall K.L."/>
            <person name="Oliver K."/>
            <person name="Price C."/>
            <person name="Quail M.A."/>
            <person name="Urushihara H."/>
            <person name="Hernandez J."/>
            <person name="Rabbinowitsch E."/>
            <person name="Steffen D."/>
            <person name="Sanders M."/>
            <person name="Ma J."/>
            <person name="Kohara Y."/>
            <person name="Sharp S."/>
            <person name="Simmonds M.N."/>
            <person name="Spiegler S."/>
            <person name="Tivey A."/>
            <person name="Sugano S."/>
            <person name="White B."/>
            <person name="Walker D."/>
            <person name="Woodward J.R."/>
            <person name="Winckler T."/>
            <person name="Tanaka Y."/>
            <person name="Shaulsky G."/>
            <person name="Schleicher M."/>
            <person name="Weinstock G.M."/>
            <person name="Rosenthal A."/>
            <person name="Cox E.C."/>
            <person name="Chisholm R.L."/>
            <person name="Gibbs R.A."/>
            <person name="Loomis W.F."/>
            <person name="Platzer M."/>
            <person name="Kay R.R."/>
            <person name="Williams J.G."/>
            <person name="Dear P.H."/>
            <person name="Noegel A.A."/>
            <person name="Barrell B.G."/>
            <person name="Kuspa A."/>
        </authorList>
    </citation>
    <scope>NUCLEOTIDE SEQUENCE [LARGE SCALE GENOMIC DNA]</scope>
    <source>
        <strain>AX4</strain>
    </source>
</reference>
<accession>P16642</accession>
<accession>Q558X3</accession>
<sequence length="102" mass="11817">MVDLKITLVNEDGESTISGKGHPLPAPLIFPPIYIFRFTQYQTEGKLWDKNEFQIKSGKIEFDGEEYDIPESKGTWSKDDEENAIDVNLHLFRPPEKFFPKN</sequence>
<gene>
    <name type="primary">csbA</name>
    <name type="ORF">DDB_G0272833</name>
</gene>
<name>CSBA_DICDI</name>